<proteinExistence type="inferred from homology"/>
<dbReference type="EMBL" id="AP009351">
    <property type="protein sequence ID" value="BAF67436.1"/>
    <property type="molecule type" value="Genomic_DNA"/>
</dbReference>
<dbReference type="RefSeq" id="WP_000379054.1">
    <property type="nucleotide sequence ID" value="NZ_JBBIAE010000001.1"/>
</dbReference>
<dbReference type="SMR" id="A6QGF4"/>
<dbReference type="KEGG" id="sae:NWMN_1164"/>
<dbReference type="HOGENOM" id="CLU_033123_0_0_9"/>
<dbReference type="Proteomes" id="UP000006386">
    <property type="component" value="Chromosome"/>
</dbReference>
<dbReference type="GO" id="GO:0009376">
    <property type="term" value="C:HslUV protease complex"/>
    <property type="evidence" value="ECO:0007669"/>
    <property type="project" value="UniProtKB-UniRule"/>
</dbReference>
<dbReference type="GO" id="GO:0005524">
    <property type="term" value="F:ATP binding"/>
    <property type="evidence" value="ECO:0007669"/>
    <property type="project" value="UniProtKB-UniRule"/>
</dbReference>
<dbReference type="GO" id="GO:0016887">
    <property type="term" value="F:ATP hydrolysis activity"/>
    <property type="evidence" value="ECO:0007669"/>
    <property type="project" value="InterPro"/>
</dbReference>
<dbReference type="GO" id="GO:0008233">
    <property type="term" value="F:peptidase activity"/>
    <property type="evidence" value="ECO:0007669"/>
    <property type="project" value="InterPro"/>
</dbReference>
<dbReference type="GO" id="GO:0036402">
    <property type="term" value="F:proteasome-activating activity"/>
    <property type="evidence" value="ECO:0007669"/>
    <property type="project" value="UniProtKB-UniRule"/>
</dbReference>
<dbReference type="GO" id="GO:0043335">
    <property type="term" value="P:protein unfolding"/>
    <property type="evidence" value="ECO:0007669"/>
    <property type="project" value="UniProtKB-UniRule"/>
</dbReference>
<dbReference type="GO" id="GO:0051603">
    <property type="term" value="P:proteolysis involved in protein catabolic process"/>
    <property type="evidence" value="ECO:0007669"/>
    <property type="project" value="TreeGrafter"/>
</dbReference>
<dbReference type="CDD" id="cd19498">
    <property type="entry name" value="RecA-like_HslU"/>
    <property type="match status" value="1"/>
</dbReference>
<dbReference type="FunFam" id="3.40.50.300:FF:000220">
    <property type="entry name" value="ATP-dependent protease ATPase subunit HslU"/>
    <property type="match status" value="1"/>
</dbReference>
<dbReference type="Gene3D" id="1.10.8.60">
    <property type="match status" value="1"/>
</dbReference>
<dbReference type="Gene3D" id="1.10.8.10">
    <property type="entry name" value="DNA helicase RuvA subunit, C-terminal domain"/>
    <property type="match status" value="1"/>
</dbReference>
<dbReference type="Gene3D" id="3.40.50.300">
    <property type="entry name" value="P-loop containing nucleotide triphosphate hydrolases"/>
    <property type="match status" value="2"/>
</dbReference>
<dbReference type="HAMAP" id="MF_00249">
    <property type="entry name" value="HslU"/>
    <property type="match status" value="1"/>
</dbReference>
<dbReference type="InterPro" id="IPR003593">
    <property type="entry name" value="AAA+_ATPase"/>
</dbReference>
<dbReference type="InterPro" id="IPR050052">
    <property type="entry name" value="ATP-dep_Clp_protease_ClpX"/>
</dbReference>
<dbReference type="InterPro" id="IPR003959">
    <property type="entry name" value="ATPase_AAA_core"/>
</dbReference>
<dbReference type="InterPro" id="IPR019489">
    <property type="entry name" value="Clp_ATPase_C"/>
</dbReference>
<dbReference type="InterPro" id="IPR004491">
    <property type="entry name" value="HslU"/>
</dbReference>
<dbReference type="InterPro" id="IPR027417">
    <property type="entry name" value="P-loop_NTPase"/>
</dbReference>
<dbReference type="NCBIfam" id="TIGR00390">
    <property type="entry name" value="hslU"/>
    <property type="match status" value="1"/>
</dbReference>
<dbReference type="NCBIfam" id="NF003544">
    <property type="entry name" value="PRK05201.1"/>
    <property type="match status" value="1"/>
</dbReference>
<dbReference type="PANTHER" id="PTHR48102">
    <property type="entry name" value="ATP-DEPENDENT CLP PROTEASE ATP-BINDING SUBUNIT CLPX-LIKE, MITOCHONDRIAL-RELATED"/>
    <property type="match status" value="1"/>
</dbReference>
<dbReference type="PANTHER" id="PTHR48102:SF3">
    <property type="entry name" value="ATP-DEPENDENT PROTEASE ATPASE SUBUNIT HSLU"/>
    <property type="match status" value="1"/>
</dbReference>
<dbReference type="Pfam" id="PF00004">
    <property type="entry name" value="AAA"/>
    <property type="match status" value="1"/>
</dbReference>
<dbReference type="Pfam" id="PF07724">
    <property type="entry name" value="AAA_2"/>
    <property type="match status" value="1"/>
</dbReference>
<dbReference type="Pfam" id="PF10431">
    <property type="entry name" value="ClpB_D2-small"/>
    <property type="match status" value="1"/>
</dbReference>
<dbReference type="SMART" id="SM00382">
    <property type="entry name" value="AAA"/>
    <property type="match status" value="1"/>
</dbReference>
<dbReference type="SMART" id="SM01086">
    <property type="entry name" value="ClpB_D2-small"/>
    <property type="match status" value="1"/>
</dbReference>
<dbReference type="SUPFAM" id="SSF52540">
    <property type="entry name" value="P-loop containing nucleoside triphosphate hydrolases"/>
    <property type="match status" value="1"/>
</dbReference>
<protein>
    <recommendedName>
        <fullName evidence="1">ATP-dependent protease ATPase subunit HslU</fullName>
    </recommendedName>
    <alternativeName>
        <fullName evidence="1">Unfoldase HslU</fullName>
    </alternativeName>
</protein>
<comment type="function">
    <text evidence="1">ATPase subunit of a proteasome-like degradation complex; this subunit has chaperone activity. The binding of ATP and its subsequent hydrolysis by HslU are essential for unfolding of protein substrates subsequently hydrolyzed by HslV. HslU recognizes the N-terminal part of its protein substrates and unfolds these before they are guided to HslV for hydrolysis.</text>
</comment>
<comment type="subunit">
    <text evidence="1">A double ring-shaped homohexamer of HslV is capped on each side by a ring-shaped HslU homohexamer. The assembly of the HslU/HslV complex is dependent on binding of ATP.</text>
</comment>
<comment type="subcellular location">
    <subcellularLocation>
        <location evidence="1">Cytoplasm</location>
    </subcellularLocation>
</comment>
<comment type="similarity">
    <text evidence="1">Belongs to the ClpX chaperone family. HslU subfamily.</text>
</comment>
<gene>
    <name evidence="1" type="primary">hslU</name>
    <name type="ordered locus">NWMN_1164</name>
</gene>
<feature type="chain" id="PRO_1000071855" description="ATP-dependent protease ATPase subunit HslU">
    <location>
        <begin position="1"/>
        <end position="467"/>
    </location>
</feature>
<feature type="region of interest" description="Disordered" evidence="2">
    <location>
        <begin position="149"/>
        <end position="192"/>
    </location>
</feature>
<feature type="compositionally biased region" description="Basic and acidic residues" evidence="2">
    <location>
        <begin position="178"/>
        <end position="192"/>
    </location>
</feature>
<feature type="binding site" evidence="1">
    <location>
        <position position="22"/>
    </location>
    <ligand>
        <name>ATP</name>
        <dbReference type="ChEBI" id="CHEBI:30616"/>
    </ligand>
</feature>
<feature type="binding site" evidence="1">
    <location>
        <begin position="64"/>
        <end position="69"/>
    </location>
    <ligand>
        <name>ATP</name>
        <dbReference type="ChEBI" id="CHEBI:30616"/>
    </ligand>
</feature>
<feature type="binding site" evidence="1">
    <location>
        <position position="280"/>
    </location>
    <ligand>
        <name>ATP</name>
        <dbReference type="ChEBI" id="CHEBI:30616"/>
    </ligand>
</feature>
<feature type="binding site" evidence="1">
    <location>
        <position position="345"/>
    </location>
    <ligand>
        <name>ATP</name>
        <dbReference type="ChEBI" id="CHEBI:30616"/>
    </ligand>
</feature>
<feature type="binding site" evidence="1">
    <location>
        <position position="417"/>
    </location>
    <ligand>
        <name>ATP</name>
        <dbReference type="ChEBI" id="CHEBI:30616"/>
    </ligand>
</feature>
<keyword id="KW-0067">ATP-binding</keyword>
<keyword id="KW-0143">Chaperone</keyword>
<keyword id="KW-0963">Cytoplasm</keyword>
<keyword id="KW-0547">Nucleotide-binding</keyword>
<name>HSLU_STAAE</name>
<accession>A6QGF4</accession>
<organism>
    <name type="scientific">Staphylococcus aureus (strain Newman)</name>
    <dbReference type="NCBI Taxonomy" id="426430"/>
    <lineage>
        <taxon>Bacteria</taxon>
        <taxon>Bacillati</taxon>
        <taxon>Bacillota</taxon>
        <taxon>Bacilli</taxon>
        <taxon>Bacillales</taxon>
        <taxon>Staphylococcaceae</taxon>
        <taxon>Staphylococcus</taxon>
    </lineage>
</organism>
<reference key="1">
    <citation type="journal article" date="2008" name="J. Bacteriol.">
        <title>Genome sequence of Staphylococcus aureus strain Newman and comparative analysis of staphylococcal genomes: polymorphism and evolution of two major pathogenicity islands.</title>
        <authorList>
            <person name="Baba T."/>
            <person name="Bae T."/>
            <person name="Schneewind O."/>
            <person name="Takeuchi F."/>
            <person name="Hiramatsu K."/>
        </authorList>
    </citation>
    <scope>NUCLEOTIDE SEQUENCE [LARGE SCALE GENOMIC DNA]</scope>
    <source>
        <strain>Newman</strain>
    </source>
</reference>
<sequence>MDTAGIRLTPKEIVSKLNEYIVGQNDAKRKVAIALRNRYRRSLLDEESKQEISPKNILMIGPTGVGKTEIARRMAKVVGAPFIKVEATKFTEVGYVGRDVESMVRDLVDVSVRLVKAQKKSLVQDEATAKANEKLVKLLVPSMKKKASQTNNPLESLFGGAIPNFGQNNEDEEEPPTEEIKTKRSEIKRQLEEGKLEKEKVRIKVEQDPGALGMLGTNQNQQMQEMMNQLMPKKKVEREVAVETARKILADSYADELIDQESANQEALELAEQMGIIFIDEIDKVATNNHNSGQDVSRQGVQRDILPILEGSVIQTKYGTVNTEHMLFIGAGAFHVSKPSDLIPELQGRFPIRVELDSLSVEDFVRILTEPKLSLIKQYEALLQTEEVTVNFTDEAITRLAEIAYQVNQDTDNIGARRLHTILEKMLEDLSFEAPSMPNAVVDITPQYVDDKLKSISTNKDLSAFIL</sequence>
<evidence type="ECO:0000255" key="1">
    <source>
        <dbReference type="HAMAP-Rule" id="MF_00249"/>
    </source>
</evidence>
<evidence type="ECO:0000256" key="2">
    <source>
        <dbReference type="SAM" id="MobiDB-lite"/>
    </source>
</evidence>